<name>H4_MYCMD</name>
<protein>
    <recommendedName>
        <fullName>Histone H4</fullName>
    </recommendedName>
</protein>
<feature type="initiator methionine" description="Removed" evidence="1">
    <location>
        <position position="1"/>
    </location>
</feature>
<feature type="chain" id="PRO_0000158371" description="Histone H4">
    <location>
        <begin position="2"/>
        <end position="103"/>
    </location>
</feature>
<feature type="DNA-binding region">
    <location>
        <begin position="17"/>
        <end position="21"/>
    </location>
</feature>
<feature type="region of interest" description="Disordered" evidence="4">
    <location>
        <begin position="1"/>
        <end position="20"/>
    </location>
</feature>
<feature type="compositionally biased region" description="Gly residues" evidence="4">
    <location>
        <begin position="1"/>
        <end position="14"/>
    </location>
</feature>
<feature type="modified residue" description="N6-acetyl-N6-methyllysine; alternate" evidence="3">
    <location>
        <position position="6"/>
    </location>
</feature>
<feature type="modified residue" description="N6-methyllysine; alternate" evidence="2">
    <location>
        <position position="6"/>
    </location>
</feature>
<feature type="modified residue" description="N6-methyllysine; alternate" evidence="2">
    <location>
        <position position="9"/>
    </location>
</feature>
<feature type="modified residue" description="N6-acetyl-N6-methyllysine; alternate" evidence="3">
    <location>
        <position position="13"/>
    </location>
</feature>
<feature type="modified residue" description="N6-methyllysine; alternate" evidence="2">
    <location>
        <position position="13"/>
    </location>
</feature>
<feature type="modified residue" description="N6-glutaryllysine" evidence="2">
    <location>
        <position position="92"/>
    </location>
</feature>
<feature type="sequence conflict" description="In Ref. 1; CAG26759." evidence="5" ref="1">
    <original>I</original>
    <variation>V</variation>
    <location>
        <position position="22"/>
    </location>
</feature>
<sequence length="103" mass="11382">MSGRGKGGKGLGKGGAKRHRKILRDNIQGITKPAIRRLARRGGVKRISGLIYDETRGVLKLFLESVIRDSVTYTEHAKRKTVTSLDVVYALKRQGRTLYGFGA</sequence>
<reference key="1">
    <citation type="journal article" date="2005" name="EMBO J.">
        <title>A novel mechanism of nuclear envelope break-down in a fungus: nuclear migration strips off the envelope.</title>
        <authorList>
            <person name="Straube A."/>
            <person name="Weber I."/>
            <person name="Steinberg G."/>
        </authorList>
    </citation>
    <scope>NUCLEOTIDE SEQUENCE [GENOMIC DNA]</scope>
</reference>
<reference key="2">
    <citation type="journal article" date="2006" name="Nature">
        <title>Insights from the genome of the biotrophic fungal plant pathogen Ustilago maydis.</title>
        <authorList>
            <person name="Kaemper J."/>
            <person name="Kahmann R."/>
            <person name="Boelker M."/>
            <person name="Ma L.-J."/>
            <person name="Brefort T."/>
            <person name="Saville B.J."/>
            <person name="Banuett F."/>
            <person name="Kronstad J.W."/>
            <person name="Gold S.E."/>
            <person name="Mueller O."/>
            <person name="Perlin M.H."/>
            <person name="Woesten H.A.B."/>
            <person name="de Vries R."/>
            <person name="Ruiz-Herrera J."/>
            <person name="Reynaga-Pena C.G."/>
            <person name="Snetselaar K."/>
            <person name="McCann M."/>
            <person name="Perez-Martin J."/>
            <person name="Feldbruegge M."/>
            <person name="Basse C.W."/>
            <person name="Steinberg G."/>
            <person name="Ibeas J.I."/>
            <person name="Holloman W."/>
            <person name="Guzman P."/>
            <person name="Farman M.L."/>
            <person name="Stajich J.E."/>
            <person name="Sentandreu R."/>
            <person name="Gonzalez-Prieto J.M."/>
            <person name="Kennell J.C."/>
            <person name="Molina L."/>
            <person name="Schirawski J."/>
            <person name="Mendoza-Mendoza A."/>
            <person name="Greilinger D."/>
            <person name="Muench K."/>
            <person name="Roessel N."/>
            <person name="Scherer M."/>
            <person name="Vranes M."/>
            <person name="Ladendorf O."/>
            <person name="Vincon V."/>
            <person name="Fuchs U."/>
            <person name="Sandrock B."/>
            <person name="Meng S."/>
            <person name="Ho E.C.H."/>
            <person name="Cahill M.J."/>
            <person name="Boyce K.J."/>
            <person name="Klose J."/>
            <person name="Klosterman S.J."/>
            <person name="Deelstra H.J."/>
            <person name="Ortiz-Castellanos L."/>
            <person name="Li W."/>
            <person name="Sanchez-Alonso P."/>
            <person name="Schreier P.H."/>
            <person name="Haeuser-Hahn I."/>
            <person name="Vaupel M."/>
            <person name="Koopmann E."/>
            <person name="Friedrich G."/>
            <person name="Voss H."/>
            <person name="Schlueter T."/>
            <person name="Margolis J."/>
            <person name="Platt D."/>
            <person name="Swimmer C."/>
            <person name="Gnirke A."/>
            <person name="Chen F."/>
            <person name="Vysotskaia V."/>
            <person name="Mannhaupt G."/>
            <person name="Gueldener U."/>
            <person name="Muensterkoetter M."/>
            <person name="Haase D."/>
            <person name="Oesterheld M."/>
            <person name="Mewes H.-W."/>
            <person name="Mauceli E.W."/>
            <person name="DeCaprio D."/>
            <person name="Wade C.M."/>
            <person name="Butler J."/>
            <person name="Young S.K."/>
            <person name="Jaffe D.B."/>
            <person name="Calvo S.E."/>
            <person name="Nusbaum C."/>
            <person name="Galagan J.E."/>
            <person name="Birren B.W."/>
        </authorList>
    </citation>
    <scope>NUCLEOTIDE SEQUENCE [LARGE SCALE GENOMIC DNA]</scope>
    <source>
        <strain>DSM 14603 / FGSC 9021 / UM521</strain>
    </source>
</reference>
<reference key="3">
    <citation type="submission" date="2014-09" db="EMBL/GenBank/DDBJ databases">
        <authorList>
            <person name="Gueldener U."/>
            <person name="Muensterkoetter M."/>
            <person name="Walter M.C."/>
            <person name="Mannhaupt G."/>
            <person name="Kahmann R."/>
        </authorList>
    </citation>
    <scope>GENOME REANNOTATION</scope>
    <source>
        <strain>DSM 14603 / FGSC 9021 / UM521</strain>
    </source>
</reference>
<accession>Q6ZXX3</accession>
<accession>A0A0D1E4J4</accession>
<accession>Q4PB03</accession>
<evidence type="ECO:0000250" key="1"/>
<evidence type="ECO:0000250" key="2">
    <source>
        <dbReference type="UniProtKB" id="P02309"/>
    </source>
</evidence>
<evidence type="ECO:0000250" key="3">
    <source>
        <dbReference type="UniProtKB" id="P62805"/>
    </source>
</evidence>
<evidence type="ECO:0000256" key="4">
    <source>
        <dbReference type="SAM" id="MobiDB-lite"/>
    </source>
</evidence>
<evidence type="ECO:0000305" key="5"/>
<dbReference type="EMBL" id="AJ646896">
    <property type="protein sequence ID" value="CAG26759.1"/>
    <property type="molecule type" value="Genomic_DNA"/>
</dbReference>
<dbReference type="EMBL" id="CM003145">
    <property type="protein sequence ID" value="KIS69375.1"/>
    <property type="molecule type" value="Genomic_DNA"/>
</dbReference>
<dbReference type="RefSeq" id="XP_011389079.1">
    <property type="nucleotide sequence ID" value="XM_011390777.1"/>
</dbReference>
<dbReference type="SMR" id="Q6ZXX3"/>
<dbReference type="FunCoup" id="Q6ZXX3">
    <property type="interactions" value="276"/>
</dbReference>
<dbReference type="STRING" id="237631.Q6ZXX3"/>
<dbReference type="EnsemblFungi" id="KIS69375">
    <property type="protein sequence ID" value="KIS69375"/>
    <property type="gene ID" value="UMAG_02710"/>
</dbReference>
<dbReference type="GeneID" id="23563389"/>
<dbReference type="KEGG" id="uma:UMAG_02710"/>
<dbReference type="VEuPathDB" id="FungiDB:UMAG_02710"/>
<dbReference type="eggNOG" id="KOG3467">
    <property type="taxonomic scope" value="Eukaryota"/>
</dbReference>
<dbReference type="HOGENOM" id="CLU_109117_2_3_1"/>
<dbReference type="InParanoid" id="Q6ZXX3"/>
<dbReference type="OMA" id="QKEHING"/>
<dbReference type="OrthoDB" id="2532770at2759"/>
<dbReference type="Proteomes" id="UP000000561">
    <property type="component" value="Chromosome 6"/>
</dbReference>
<dbReference type="GO" id="GO:0000786">
    <property type="term" value="C:nucleosome"/>
    <property type="evidence" value="ECO:0007669"/>
    <property type="project" value="UniProtKB-KW"/>
</dbReference>
<dbReference type="GO" id="GO:0005634">
    <property type="term" value="C:nucleus"/>
    <property type="evidence" value="ECO:0007669"/>
    <property type="project" value="UniProtKB-SubCell"/>
</dbReference>
<dbReference type="GO" id="GO:0003677">
    <property type="term" value="F:DNA binding"/>
    <property type="evidence" value="ECO:0000318"/>
    <property type="project" value="GO_Central"/>
</dbReference>
<dbReference type="GO" id="GO:0046982">
    <property type="term" value="F:protein heterodimerization activity"/>
    <property type="evidence" value="ECO:0007669"/>
    <property type="project" value="InterPro"/>
</dbReference>
<dbReference type="GO" id="GO:0030527">
    <property type="term" value="F:structural constituent of chromatin"/>
    <property type="evidence" value="ECO:0007669"/>
    <property type="project" value="InterPro"/>
</dbReference>
<dbReference type="GO" id="GO:0006334">
    <property type="term" value="P:nucleosome assembly"/>
    <property type="evidence" value="ECO:0000318"/>
    <property type="project" value="GO_Central"/>
</dbReference>
<dbReference type="CDD" id="cd22912">
    <property type="entry name" value="HFD_H4"/>
    <property type="match status" value="1"/>
</dbReference>
<dbReference type="FunFam" id="1.10.20.10:FF:000007">
    <property type="entry name" value="Histone H4"/>
    <property type="match status" value="1"/>
</dbReference>
<dbReference type="Gene3D" id="1.10.20.10">
    <property type="entry name" value="Histone, subunit A"/>
    <property type="match status" value="1"/>
</dbReference>
<dbReference type="InterPro" id="IPR035425">
    <property type="entry name" value="CENP-T/H4_C"/>
</dbReference>
<dbReference type="InterPro" id="IPR009072">
    <property type="entry name" value="Histone-fold"/>
</dbReference>
<dbReference type="InterPro" id="IPR001951">
    <property type="entry name" value="Histone_H4"/>
</dbReference>
<dbReference type="InterPro" id="IPR019809">
    <property type="entry name" value="Histone_H4_CS"/>
</dbReference>
<dbReference type="PANTHER" id="PTHR10484">
    <property type="entry name" value="HISTONE H4"/>
    <property type="match status" value="1"/>
</dbReference>
<dbReference type="Pfam" id="PF15511">
    <property type="entry name" value="CENP-T_C"/>
    <property type="match status" value="1"/>
</dbReference>
<dbReference type="PRINTS" id="PR00623">
    <property type="entry name" value="HISTONEH4"/>
</dbReference>
<dbReference type="SMART" id="SM00417">
    <property type="entry name" value="H4"/>
    <property type="match status" value="1"/>
</dbReference>
<dbReference type="SUPFAM" id="SSF47113">
    <property type="entry name" value="Histone-fold"/>
    <property type="match status" value="1"/>
</dbReference>
<dbReference type="PROSITE" id="PS00047">
    <property type="entry name" value="HISTONE_H4"/>
    <property type="match status" value="1"/>
</dbReference>
<gene>
    <name type="primary">HHF1</name>
    <name type="ORF">UMAG_02710</name>
</gene>
<organism>
    <name type="scientific">Mycosarcoma maydis</name>
    <name type="common">Corn smut fungus</name>
    <name type="synonym">Ustilago maydis</name>
    <dbReference type="NCBI Taxonomy" id="5270"/>
    <lineage>
        <taxon>Eukaryota</taxon>
        <taxon>Fungi</taxon>
        <taxon>Dikarya</taxon>
        <taxon>Basidiomycota</taxon>
        <taxon>Ustilaginomycotina</taxon>
        <taxon>Ustilaginomycetes</taxon>
        <taxon>Ustilaginales</taxon>
        <taxon>Ustilaginaceae</taxon>
        <taxon>Mycosarcoma</taxon>
    </lineage>
</organism>
<comment type="function">
    <text>Core component of nucleosome. Nucleosomes wrap and compact DNA into chromatin, limiting DNA accessibility to the cellular machineries which require DNA as a template. Histones thereby play a central role in transcription regulation, DNA repair, DNA replication and chromosomal stability. DNA accessibility is regulated via a complex set of post-translational modifications of histones, also called histone code, and nucleosome remodeling.</text>
</comment>
<comment type="subunit">
    <text>The nucleosome is a histone octamer containing two molecules each of H2A, H2B, H3 and H4 assembled in one H3-H4 heterotetramer and two H2A-H2B heterodimers. The octamer wraps approximately 147 bp of DNA.</text>
</comment>
<comment type="subcellular location">
    <subcellularLocation>
        <location evidence="1">Nucleus</location>
    </subcellularLocation>
    <subcellularLocation>
        <location evidence="1">Chromosome</location>
    </subcellularLocation>
</comment>
<comment type="PTM">
    <text evidence="2">Glutarylation at Lys-92 (H4K91glu) destabilizes nucleosomes by promoting dissociation of the H2A-H2B dimers from nucleosomes.</text>
</comment>
<comment type="similarity">
    <text evidence="5">Belongs to the histone H4 family.</text>
</comment>
<keyword id="KW-0007">Acetylation</keyword>
<keyword id="KW-0158">Chromosome</keyword>
<keyword id="KW-0238">DNA-binding</keyword>
<keyword id="KW-0488">Methylation</keyword>
<keyword id="KW-0544">Nucleosome core</keyword>
<keyword id="KW-0539">Nucleus</keyword>
<keyword id="KW-1185">Reference proteome</keyword>
<proteinExistence type="inferred from homology"/>